<gene>
    <name type="primary">stu-1</name>
    <name type="ORF">NCU07693</name>
</gene>
<sequence length="1136" mass="123636">MAERITDEQVADLLAILRTDASVDAKANRITAVKTSIKQHNVPATCFAPLFEALHIASTAQHPVLVNAGFTTLNHLLARLARQDPKFLAKEAPHTLPVVVDKLGDQKDKFRQIAVQALTTLYKVAPVDVERSVRNIAMVGKNPRAKEMSMHWLLQTHQEQGLQFRAYVPTLMELLEDADGSVRDVAKTTVIELFKNAPNTAKSDLKRQLKNFKVRPAIEQVIVKELNNPSSSVSSHQNDMMDLDEPVMPTRAPAPASIRTNLSASVPTLASERPLTPGLDSRPEPVEPQFVNTQRELDDIFRDMHMFFDGRETEQNWLKREESMTKLRRLIAGNAVSDFHDSFLAALRALLDGIIKAVTSLRTSLSKEGCALVQDIATAYGPGMDPMVEILMQTFVKLCAATKKISSAQANATINTILGKVSYTNRLMQHIWMACQDKNVQPRLYATEWLTTMLTKMAHHKNQVEHTGGLDLIEKCIKKGLADANPGVREKMRATYWTFSGIWPARATHIMNELDLTAQKLLQKDPHNPNAHSRTETGGARPGMGLSKSVMGAPKPSVRDAIIAQKRAMASSKNQPPRPGSAMAHFSPVGTTRNVSSTSQASVASASTASAVPAPTKSAFGASSGGLSGAPMRPGKRRPEVAARPATAGPYSVRNEVPPAEPASPPSKPRIKTVTSPKTQTLVISPKKAIPRPQQGHSTNSSESGIPIPVSGISSPTKPTSAFGLRSPRSPLAPELPPSSVIASPSRVMPDPAQIPLPESSPSKDEELSLVVPGSVLPTQKTPSPTEESQQPQIAIVPIEAVEIVPDSPYRSVQVYEDPYTAGQTQPQSTYTSPVLEPKPVNEGAATSPPPQPSYDGENGHDMGEIPIPSSPERTRQNSRLLDSGISKVETKSLDVHGFRKLQGIIRDPKGGAIFTDDKFNALLSGLFEFLEAHPSEIPHVPAEKQQDVKAQILATIKLLLKKMRENFRPHVSRGLDSLLRARAAYDSRSHIVSGMELLADELITLGDPTEITLVLANTLREALLDKDQQHNTAARSLSMGMHVLKEVVESSANSSTPFTPTEQELDTLAGLAAKCLESADSAVRMDAVQLCVALHAKVGDQRFWDAVKREGVRDDPKSLITYYIVRRQREVGTNA</sequence>
<keyword id="KW-0131">Cell cycle</keyword>
<keyword id="KW-0132">Cell division</keyword>
<keyword id="KW-0963">Cytoplasm</keyword>
<keyword id="KW-0206">Cytoskeleton</keyword>
<keyword id="KW-0493">Microtubule</keyword>
<keyword id="KW-0498">Mitosis</keyword>
<keyword id="KW-0539">Nucleus</keyword>
<keyword id="KW-1185">Reference proteome</keyword>
<keyword id="KW-0677">Repeat</keyword>
<dbReference type="EMBL" id="CM002239">
    <property type="protein sequence ID" value="EAA33043.1"/>
    <property type="molecule type" value="Genomic_DNA"/>
</dbReference>
<dbReference type="RefSeq" id="XP_962279.1">
    <property type="nucleotide sequence ID" value="XM_957186.2"/>
</dbReference>
<dbReference type="STRING" id="367110.Q7S9L2"/>
<dbReference type="PaxDb" id="5141-EFNCRP00000008032"/>
<dbReference type="EnsemblFungi" id="EAA33043">
    <property type="protein sequence ID" value="EAA33043"/>
    <property type="gene ID" value="NCU07693"/>
</dbReference>
<dbReference type="GeneID" id="3878427"/>
<dbReference type="KEGG" id="ncr:NCU07693"/>
<dbReference type="VEuPathDB" id="FungiDB:NCU07693"/>
<dbReference type="HOGENOM" id="CLU_004060_0_0_1"/>
<dbReference type="InParanoid" id="Q7S9L2"/>
<dbReference type="OMA" id="GNAPHDF"/>
<dbReference type="OrthoDB" id="46159at2759"/>
<dbReference type="Proteomes" id="UP000001805">
    <property type="component" value="Chromosome 4, Linkage Group IV"/>
</dbReference>
<dbReference type="GO" id="GO:0005881">
    <property type="term" value="C:cytoplasmic microtubule"/>
    <property type="evidence" value="ECO:0000318"/>
    <property type="project" value="GO_Central"/>
</dbReference>
<dbReference type="GO" id="GO:0005815">
    <property type="term" value="C:microtubule organizing center"/>
    <property type="evidence" value="ECO:0000318"/>
    <property type="project" value="GO_Central"/>
</dbReference>
<dbReference type="GO" id="GO:0072686">
    <property type="term" value="C:mitotic spindle"/>
    <property type="evidence" value="ECO:0000318"/>
    <property type="project" value="GO_Central"/>
</dbReference>
<dbReference type="GO" id="GO:1990023">
    <property type="term" value="C:mitotic spindle midzone"/>
    <property type="evidence" value="ECO:0000318"/>
    <property type="project" value="GO_Central"/>
</dbReference>
<dbReference type="GO" id="GO:0005634">
    <property type="term" value="C:nucleus"/>
    <property type="evidence" value="ECO:0007669"/>
    <property type="project" value="UniProtKB-SubCell"/>
</dbReference>
<dbReference type="GO" id="GO:0005876">
    <property type="term" value="C:spindle microtubule"/>
    <property type="evidence" value="ECO:0000318"/>
    <property type="project" value="GO_Central"/>
</dbReference>
<dbReference type="GO" id="GO:0008017">
    <property type="term" value="F:microtubule binding"/>
    <property type="evidence" value="ECO:0000318"/>
    <property type="project" value="GO_Central"/>
</dbReference>
<dbReference type="GO" id="GO:0060172">
    <property type="term" value="P:astral microtubule depolymerization"/>
    <property type="evidence" value="ECO:0000318"/>
    <property type="project" value="GO_Central"/>
</dbReference>
<dbReference type="GO" id="GO:0051301">
    <property type="term" value="P:cell division"/>
    <property type="evidence" value="ECO:0007669"/>
    <property type="project" value="UniProtKB-KW"/>
</dbReference>
<dbReference type="GO" id="GO:0090307">
    <property type="term" value="P:mitotic spindle assembly"/>
    <property type="evidence" value="ECO:0000318"/>
    <property type="project" value="GO_Central"/>
</dbReference>
<dbReference type="Gene3D" id="1.25.10.10">
    <property type="entry name" value="Leucine-rich Repeat Variant"/>
    <property type="match status" value="3"/>
</dbReference>
<dbReference type="InterPro" id="IPR011989">
    <property type="entry name" value="ARM-like"/>
</dbReference>
<dbReference type="InterPro" id="IPR016024">
    <property type="entry name" value="ARM-type_fold"/>
</dbReference>
<dbReference type="InterPro" id="IPR024395">
    <property type="entry name" value="CLASP_N_dom"/>
</dbReference>
<dbReference type="InterPro" id="IPR034085">
    <property type="entry name" value="TOG"/>
</dbReference>
<dbReference type="PANTHER" id="PTHR21567">
    <property type="entry name" value="CLASP"/>
    <property type="match status" value="1"/>
</dbReference>
<dbReference type="PANTHER" id="PTHR21567:SF9">
    <property type="entry name" value="CLIP-ASSOCIATING PROTEIN"/>
    <property type="match status" value="1"/>
</dbReference>
<dbReference type="Pfam" id="PF12348">
    <property type="entry name" value="CLASP_N"/>
    <property type="match status" value="2"/>
</dbReference>
<dbReference type="SMART" id="SM01349">
    <property type="entry name" value="TOG"/>
    <property type="match status" value="2"/>
</dbReference>
<dbReference type="SUPFAM" id="SSF48371">
    <property type="entry name" value="ARM repeat"/>
    <property type="match status" value="1"/>
</dbReference>
<evidence type="ECO:0000250" key="1"/>
<evidence type="ECO:0000256" key="2">
    <source>
        <dbReference type="SAM" id="MobiDB-lite"/>
    </source>
</evidence>
<evidence type="ECO:0000305" key="3"/>
<accession>Q7S9L2</accession>
<proteinExistence type="inferred from homology"/>
<name>STU1_NEUCR</name>
<protein>
    <recommendedName>
        <fullName>Protein stu-1</fullName>
    </recommendedName>
</protein>
<comment type="function">
    <text evidence="1">Microtubule binding protein that promotes the stabilization of dynamic microtubules. Required for mitotic spindle formation (By similarity).</text>
</comment>
<comment type="subunit">
    <text evidence="1">Interacts with microtubules.</text>
</comment>
<comment type="subcellular location">
    <subcellularLocation>
        <location evidence="1">Nucleus</location>
    </subcellularLocation>
    <subcellularLocation>
        <location evidence="1">Cytoplasm</location>
        <location evidence="1">Cytoskeleton</location>
        <location evidence="1">Spindle</location>
    </subcellularLocation>
    <subcellularLocation>
        <location evidence="1">Cytoplasm</location>
        <location evidence="1">Cytoskeleton</location>
    </subcellularLocation>
</comment>
<comment type="similarity">
    <text evidence="3">Belongs to the CLASP family.</text>
</comment>
<reference key="1">
    <citation type="journal article" date="2003" name="Nature">
        <title>The genome sequence of the filamentous fungus Neurospora crassa.</title>
        <authorList>
            <person name="Galagan J.E."/>
            <person name="Calvo S.E."/>
            <person name="Borkovich K.A."/>
            <person name="Selker E.U."/>
            <person name="Read N.D."/>
            <person name="Jaffe D.B."/>
            <person name="FitzHugh W."/>
            <person name="Ma L.-J."/>
            <person name="Smirnov S."/>
            <person name="Purcell S."/>
            <person name="Rehman B."/>
            <person name="Elkins T."/>
            <person name="Engels R."/>
            <person name="Wang S."/>
            <person name="Nielsen C.B."/>
            <person name="Butler J."/>
            <person name="Endrizzi M."/>
            <person name="Qui D."/>
            <person name="Ianakiev P."/>
            <person name="Bell-Pedersen D."/>
            <person name="Nelson M.A."/>
            <person name="Werner-Washburne M."/>
            <person name="Selitrennikoff C.P."/>
            <person name="Kinsey J.A."/>
            <person name="Braun E.L."/>
            <person name="Zelter A."/>
            <person name="Schulte U."/>
            <person name="Kothe G.O."/>
            <person name="Jedd G."/>
            <person name="Mewes H.-W."/>
            <person name="Staben C."/>
            <person name="Marcotte E."/>
            <person name="Greenberg D."/>
            <person name="Roy A."/>
            <person name="Foley K."/>
            <person name="Naylor J."/>
            <person name="Stange-Thomann N."/>
            <person name="Barrett R."/>
            <person name="Gnerre S."/>
            <person name="Kamal M."/>
            <person name="Kamvysselis M."/>
            <person name="Mauceli E.W."/>
            <person name="Bielke C."/>
            <person name="Rudd S."/>
            <person name="Frishman D."/>
            <person name="Krystofova S."/>
            <person name="Rasmussen C."/>
            <person name="Metzenberg R.L."/>
            <person name="Perkins D.D."/>
            <person name="Kroken S."/>
            <person name="Cogoni C."/>
            <person name="Macino G."/>
            <person name="Catcheside D.E.A."/>
            <person name="Li W."/>
            <person name="Pratt R.J."/>
            <person name="Osmani S.A."/>
            <person name="DeSouza C.P.C."/>
            <person name="Glass N.L."/>
            <person name="Orbach M.J."/>
            <person name="Berglund J.A."/>
            <person name="Voelker R."/>
            <person name="Yarden O."/>
            <person name="Plamann M."/>
            <person name="Seiler S."/>
            <person name="Dunlap J.C."/>
            <person name="Radford A."/>
            <person name="Aramayo R."/>
            <person name="Natvig D.O."/>
            <person name="Alex L.A."/>
            <person name="Mannhaupt G."/>
            <person name="Ebbole D.J."/>
            <person name="Freitag M."/>
            <person name="Paulsen I."/>
            <person name="Sachs M.S."/>
            <person name="Lander E.S."/>
            <person name="Nusbaum C."/>
            <person name="Birren B.W."/>
        </authorList>
    </citation>
    <scope>NUCLEOTIDE SEQUENCE [LARGE SCALE GENOMIC DNA]</scope>
    <source>
        <strain>ATCC 24698 / 74-OR23-1A / CBS 708.71 / DSM 1257 / FGSC 987</strain>
    </source>
</reference>
<organism>
    <name type="scientific">Neurospora crassa (strain ATCC 24698 / 74-OR23-1A / CBS 708.71 / DSM 1257 / FGSC 987)</name>
    <dbReference type="NCBI Taxonomy" id="367110"/>
    <lineage>
        <taxon>Eukaryota</taxon>
        <taxon>Fungi</taxon>
        <taxon>Dikarya</taxon>
        <taxon>Ascomycota</taxon>
        <taxon>Pezizomycotina</taxon>
        <taxon>Sordariomycetes</taxon>
        <taxon>Sordariomycetidae</taxon>
        <taxon>Sordariales</taxon>
        <taxon>Sordariaceae</taxon>
        <taxon>Neurospora</taxon>
    </lineage>
</organism>
<feature type="chain" id="PRO_0000272292" description="Protein stu-1">
    <location>
        <begin position="1"/>
        <end position="1136"/>
    </location>
</feature>
<feature type="repeat" description="HEAT 1">
    <location>
        <begin position="95"/>
        <end position="133"/>
    </location>
</feature>
<feature type="repeat" description="HEAT 2">
    <location>
        <begin position="167"/>
        <end position="205"/>
    </location>
</feature>
<feature type="region of interest" description="Disordered" evidence="2">
    <location>
        <begin position="524"/>
        <end position="554"/>
    </location>
</feature>
<feature type="region of interest" description="Disordered" evidence="2">
    <location>
        <begin position="567"/>
        <end position="794"/>
    </location>
</feature>
<feature type="region of interest" description="Disordered" evidence="2">
    <location>
        <begin position="821"/>
        <end position="884"/>
    </location>
</feature>
<feature type="compositionally biased region" description="Low complexity" evidence="2">
    <location>
        <begin position="595"/>
        <end position="622"/>
    </location>
</feature>
<feature type="compositionally biased region" description="Pro residues" evidence="2">
    <location>
        <begin position="659"/>
        <end position="668"/>
    </location>
</feature>
<feature type="compositionally biased region" description="Polar residues" evidence="2">
    <location>
        <begin position="673"/>
        <end position="683"/>
    </location>
</feature>
<feature type="compositionally biased region" description="Low complexity" evidence="2">
    <location>
        <begin position="701"/>
        <end position="716"/>
    </location>
</feature>
<feature type="compositionally biased region" description="Polar residues" evidence="2">
    <location>
        <begin position="777"/>
        <end position="793"/>
    </location>
</feature>
<feature type="compositionally biased region" description="Polar residues" evidence="2">
    <location>
        <begin position="822"/>
        <end position="833"/>
    </location>
</feature>